<keyword id="KW-0002">3D-structure</keyword>
<keyword id="KW-0025">Alternative splicing</keyword>
<keyword id="KW-0903">Direct protein sequencing</keyword>
<keyword id="KW-0225">Disease variant</keyword>
<keyword id="KW-0256">Endoplasmic reticulum</keyword>
<keyword id="KW-0349">Heme</keyword>
<keyword id="KW-0408">Iron</keyword>
<keyword id="KW-0443">Lipid metabolism</keyword>
<keyword id="KW-0472">Membrane</keyword>
<keyword id="KW-0479">Metal-binding</keyword>
<keyword id="KW-0492">Microsome</keyword>
<keyword id="KW-0503">Monooxygenase</keyword>
<keyword id="KW-0560">Oxidoreductase</keyword>
<keyword id="KW-1267">Proteomics identification</keyword>
<keyword id="KW-0657">Pseudohermaphroditism</keyword>
<keyword id="KW-1185">Reference proteome</keyword>
<keyword id="KW-0812">Transmembrane</keyword>
<keyword id="KW-1133">Transmembrane helix</keyword>
<dbReference type="EC" id="1.14.14.14" evidence="11 12"/>
<dbReference type="EMBL" id="M22246">
    <property type="protein sequence ID" value="AAA35557.1"/>
    <property type="molecule type" value="mRNA"/>
</dbReference>
<dbReference type="EMBL" id="X13589">
    <property type="protein sequence ID" value="CAA31929.1"/>
    <property type="molecule type" value="mRNA"/>
</dbReference>
<dbReference type="EMBL" id="M18856">
    <property type="protein sequence ID" value="AAA35556.1"/>
    <property type="molecule type" value="mRNA"/>
</dbReference>
<dbReference type="EMBL" id="J04127">
    <property type="protein sequence ID" value="AAA52132.1"/>
    <property type="molecule type" value="mRNA"/>
</dbReference>
<dbReference type="EMBL" id="Y07508">
    <property type="protein sequence ID" value="CAA68807.1"/>
    <property type="molecule type" value="mRNA"/>
</dbReference>
<dbReference type="EMBL" id="M30804">
    <property type="protein sequence ID" value="AAA35728.1"/>
    <property type="molecule type" value="Genomic_DNA"/>
</dbReference>
<dbReference type="EMBL" id="M30796">
    <property type="protein sequence ID" value="AAA35728.1"/>
    <property type="status" value="JOINED"/>
    <property type="molecule type" value="Genomic_DNA"/>
</dbReference>
<dbReference type="EMBL" id="M30797">
    <property type="protein sequence ID" value="AAA35728.1"/>
    <property type="status" value="JOINED"/>
    <property type="molecule type" value="Genomic_DNA"/>
</dbReference>
<dbReference type="EMBL" id="M30798">
    <property type="protein sequence ID" value="AAA35728.1"/>
    <property type="status" value="JOINED"/>
    <property type="molecule type" value="Genomic_DNA"/>
</dbReference>
<dbReference type="EMBL" id="M30800">
    <property type="protein sequence ID" value="AAA35728.1"/>
    <property type="status" value="JOINED"/>
    <property type="molecule type" value="Genomic_DNA"/>
</dbReference>
<dbReference type="EMBL" id="M30801">
    <property type="protein sequence ID" value="AAA35728.1"/>
    <property type="status" value="JOINED"/>
    <property type="molecule type" value="Genomic_DNA"/>
</dbReference>
<dbReference type="EMBL" id="M30802">
    <property type="protein sequence ID" value="AAA35728.1"/>
    <property type="status" value="JOINED"/>
    <property type="molecule type" value="Genomic_DNA"/>
</dbReference>
<dbReference type="EMBL" id="M30803">
    <property type="protein sequence ID" value="AAA35728.1"/>
    <property type="status" value="JOINED"/>
    <property type="molecule type" value="Genomic_DNA"/>
</dbReference>
<dbReference type="EMBL" id="AY957953">
    <property type="protein sequence ID" value="AAX44046.1"/>
    <property type="molecule type" value="Genomic_DNA"/>
</dbReference>
<dbReference type="EMBL" id="AC012169">
    <property type="status" value="NOT_ANNOTATED_CDS"/>
    <property type="molecule type" value="Genomic_DNA"/>
</dbReference>
<dbReference type="EMBL" id="AC020891">
    <property type="status" value="NOT_ANNOTATED_CDS"/>
    <property type="molecule type" value="Genomic_DNA"/>
</dbReference>
<dbReference type="EMBL" id="BC035714">
    <property type="protein sequence ID" value="AAH35714.1"/>
    <property type="molecule type" value="mRNA"/>
</dbReference>
<dbReference type="EMBL" id="BC107785">
    <property type="protein sequence ID" value="AAI07786.1"/>
    <property type="molecule type" value="mRNA"/>
</dbReference>
<dbReference type="EMBL" id="M28420">
    <property type="protein sequence ID" value="AAA52141.1"/>
    <property type="molecule type" value="mRNA"/>
</dbReference>
<dbReference type="CCDS" id="CCDS10139.1">
    <molecule id="P11511-1"/>
</dbReference>
<dbReference type="PIR" id="A34451">
    <property type="entry name" value="O4HU19"/>
</dbReference>
<dbReference type="RefSeq" id="NP_000094.2">
    <molecule id="P11511-1"/>
    <property type="nucleotide sequence ID" value="NM_000103.3"/>
</dbReference>
<dbReference type="RefSeq" id="NP_001334177.1">
    <molecule id="P11511-1"/>
    <property type="nucleotide sequence ID" value="NM_001347248.1"/>
</dbReference>
<dbReference type="RefSeq" id="NP_001334178.1">
    <molecule id="P11511-1"/>
    <property type="nucleotide sequence ID" value="NM_001347249.2"/>
</dbReference>
<dbReference type="RefSeq" id="NP_001334179.1">
    <molecule id="P11511-1"/>
    <property type="nucleotide sequence ID" value="NM_001347250.2"/>
</dbReference>
<dbReference type="RefSeq" id="NP_001334180.1">
    <molecule id="P11511-1"/>
    <property type="nucleotide sequence ID" value="NM_001347251.2"/>
</dbReference>
<dbReference type="RefSeq" id="NP_001334181.1">
    <molecule id="P11511-1"/>
    <property type="nucleotide sequence ID" value="NM_001347252.2"/>
</dbReference>
<dbReference type="RefSeq" id="NP_001334182.1">
    <molecule id="P11511-1"/>
    <property type="nucleotide sequence ID" value="NM_001347253.2"/>
</dbReference>
<dbReference type="RefSeq" id="NP_001334183.1">
    <molecule id="P11511-1"/>
    <property type="nucleotide sequence ID" value="NM_001347254.2"/>
</dbReference>
<dbReference type="RefSeq" id="NP_001334184.1">
    <molecule id="P11511-1"/>
    <property type="nucleotide sequence ID" value="NM_001347255.2"/>
</dbReference>
<dbReference type="RefSeq" id="NP_001334185.1">
    <molecule id="P11511-1"/>
    <property type="nucleotide sequence ID" value="NM_001347256.2"/>
</dbReference>
<dbReference type="RefSeq" id="NP_112503.1">
    <molecule id="P11511-1"/>
    <property type="nucleotide sequence ID" value="NM_031226.3"/>
</dbReference>
<dbReference type="PDB" id="3EQM">
    <property type="method" value="X-ray"/>
    <property type="resolution" value="2.90 A"/>
    <property type="chains" value="A=1-503"/>
</dbReference>
<dbReference type="PDB" id="3S79">
    <property type="method" value="X-ray"/>
    <property type="resolution" value="2.75 A"/>
    <property type="chains" value="A=1-503"/>
</dbReference>
<dbReference type="PDB" id="3S7S">
    <property type="method" value="X-ray"/>
    <property type="resolution" value="3.21 A"/>
    <property type="chains" value="A=1-503"/>
</dbReference>
<dbReference type="PDB" id="4GL5">
    <property type="method" value="X-ray"/>
    <property type="resolution" value="3.48 A"/>
    <property type="chains" value="A=1-503"/>
</dbReference>
<dbReference type="PDB" id="4GL7">
    <property type="method" value="X-ray"/>
    <property type="resolution" value="3.90 A"/>
    <property type="chains" value="A=1-503"/>
</dbReference>
<dbReference type="PDB" id="4KQ8">
    <property type="method" value="X-ray"/>
    <property type="resolution" value="3.29 A"/>
    <property type="chains" value="A=45-503"/>
</dbReference>
<dbReference type="PDB" id="5JKV">
    <property type="method" value="X-ray"/>
    <property type="resolution" value="2.75 A"/>
    <property type="chains" value="A=1-503"/>
</dbReference>
<dbReference type="PDB" id="5JKW">
    <property type="method" value="X-ray"/>
    <property type="resolution" value="3.00 A"/>
    <property type="chains" value="A=1-503"/>
</dbReference>
<dbReference type="PDB" id="5JL6">
    <property type="method" value="X-ray"/>
    <property type="resolution" value="3.00 A"/>
    <property type="chains" value="A=1-503"/>
</dbReference>
<dbReference type="PDB" id="5JL7">
    <property type="method" value="X-ray"/>
    <property type="resolution" value="3.10 A"/>
    <property type="chains" value="A=1-503"/>
</dbReference>
<dbReference type="PDB" id="5JL9">
    <property type="method" value="X-ray"/>
    <property type="resolution" value="3.10 A"/>
    <property type="chains" value="A=1-503"/>
</dbReference>
<dbReference type="PDBsum" id="3EQM"/>
<dbReference type="PDBsum" id="3S79"/>
<dbReference type="PDBsum" id="3S7S"/>
<dbReference type="PDBsum" id="4GL5"/>
<dbReference type="PDBsum" id="4GL7"/>
<dbReference type="PDBsum" id="4KQ8"/>
<dbReference type="PDBsum" id="5JKV"/>
<dbReference type="PDBsum" id="5JKW"/>
<dbReference type="PDBsum" id="5JL6"/>
<dbReference type="PDBsum" id="5JL7"/>
<dbReference type="PDBsum" id="5JL9"/>
<dbReference type="SMR" id="P11511"/>
<dbReference type="BioGRID" id="107960">
    <property type="interactions" value="41"/>
</dbReference>
<dbReference type="CORUM" id="P11511"/>
<dbReference type="FunCoup" id="P11511">
    <property type="interactions" value="380"/>
</dbReference>
<dbReference type="IntAct" id="P11511">
    <property type="interactions" value="39"/>
</dbReference>
<dbReference type="MINT" id="P11511"/>
<dbReference type="STRING" id="9606.ENSP00000379683"/>
<dbReference type="BindingDB" id="P11511"/>
<dbReference type="ChEMBL" id="CHEMBL1978"/>
<dbReference type="DrugBank" id="DB02342">
    <property type="generic name" value="2-Methoxyestradiol"/>
</dbReference>
<dbReference type="DrugBank" id="DB03601">
    <property type="generic name" value="5-deoxyflavanone"/>
</dbReference>
<dbReference type="DrugBank" id="DB07453">
    <property type="generic name" value="alpha-Naphthoflavone"/>
</dbReference>
<dbReference type="DrugBank" id="DB00357">
    <property type="generic name" value="Aminoglutethimide"/>
</dbReference>
<dbReference type="DrugBank" id="DB01217">
    <property type="generic name" value="Anastrozole"/>
</dbReference>
<dbReference type="DrugBank" id="DB01536">
    <property type="generic name" value="Androstenedione"/>
</dbReference>
<dbReference type="DrugBank" id="DB07352">
    <property type="generic name" value="Apigenin"/>
</dbReference>
<dbReference type="DrugBank" id="DB00443">
    <property type="generic name" value="Betamethasone"/>
</dbReference>
<dbReference type="DrugBank" id="DB04794">
    <property type="generic name" value="Bifonazole"/>
</dbReference>
<dbReference type="DrugBank" id="DB15334">
    <property type="generic name" value="Biochanin A"/>
</dbReference>
<dbReference type="DrugBank" id="DB07373">
    <property type="generic name" value="Boldione"/>
</dbReference>
<dbReference type="DrugBank" id="DB06719">
    <property type="generic name" value="Buserelin"/>
</dbReference>
<dbReference type="DrugBank" id="DB13009">
    <property type="generic name" value="Carbendazim"/>
</dbReference>
<dbReference type="DrugBank" id="DB00389">
    <property type="generic name" value="Carbimazole"/>
</dbReference>
<dbReference type="DrugBank" id="DB00269">
    <property type="generic name" value="Chlorotrianisene"/>
</dbReference>
<dbReference type="DrugBank" id="DB00856">
    <property type="generic name" value="Chlorphenesin"/>
</dbReference>
<dbReference type="DrugBank" id="DB15581">
    <property type="generic name" value="Chrysin"/>
</dbReference>
<dbReference type="DrugBank" id="DB04839">
    <property type="generic name" value="Cyproterone acetate"/>
</dbReference>
<dbReference type="DrugBank" id="DB01406">
    <property type="generic name" value="Danazol"/>
</dbReference>
<dbReference type="DrugBank" id="DB00514">
    <property type="generic name" value="Dextromethorphan"/>
</dbReference>
<dbReference type="DrugBank" id="DB00255">
    <property type="generic name" value="Diethylstilbestrol"/>
</dbReference>
<dbReference type="DrugBank" id="DB00858">
    <property type="generic name" value="Drostanolone"/>
</dbReference>
<dbReference type="DrugBank" id="DB01127">
    <property type="generic name" value="Econazole"/>
</dbReference>
<dbReference type="DrugBank" id="DB14598">
    <property type="generic name" value="Edetate calcium disodium anhydrous"/>
</dbReference>
<dbReference type="DrugBank" id="DB14600">
    <property type="generic name" value="Edetate disodium anhydrous"/>
</dbReference>
<dbReference type="DrugBank" id="DB00974">
    <property type="generic name" value="Edetic acid"/>
</dbReference>
<dbReference type="DrugBank" id="DB06423">
    <property type="generic name" value="Endostatin"/>
</dbReference>
<dbReference type="DrugBank" id="DB00783">
    <property type="generic name" value="Estradiol"/>
</dbReference>
<dbReference type="DrugBank" id="DB00655">
    <property type="generic name" value="Estrone"/>
</dbReference>
<dbReference type="DrugBank" id="DB00926">
    <property type="generic name" value="Etretinate"/>
</dbReference>
<dbReference type="DrugBank" id="DB00990">
    <property type="generic name" value="Exemestane"/>
</dbReference>
<dbReference type="DrugBank" id="DB16832">
    <property type="generic name" value="Fadrozole"/>
</dbReference>
<dbReference type="DrugBank" id="DB07776">
    <property type="generic name" value="Flavone"/>
</dbReference>
<dbReference type="DrugBank" id="DB08905">
    <property type="generic name" value="Formestane"/>
</dbReference>
<dbReference type="DrugBank" id="DB04539">
    <property type="generic name" value="Glyphosate"/>
</dbReference>
<dbReference type="DrugBank" id="DB01026">
    <property type="generic name" value="Ketoconazole"/>
</dbReference>
<dbReference type="DrugBank" id="DB01006">
    <property type="generic name" value="Letrozole"/>
</dbReference>
<dbReference type="DrugBank" id="DB05667">
    <property type="generic name" value="Levoketoconazole"/>
</dbReference>
<dbReference type="DrugBank" id="DB13066">
    <property type="generic name" value="Liarozole"/>
</dbReference>
<dbReference type="DrugBank" id="DB00358">
    <property type="generic name" value="Mefloquine"/>
</dbReference>
<dbReference type="DrugBank" id="DB01065">
    <property type="generic name" value="Melatonin"/>
</dbReference>
<dbReference type="DrugBank" id="DB00333">
    <property type="generic name" value="Methadone"/>
</dbReference>
<dbReference type="DrugBank" id="DB06710">
    <property type="generic name" value="Methyltestosterone"/>
</dbReference>
<dbReference type="DrugBank" id="DB01110">
    <property type="generic name" value="Miconazole"/>
</dbReference>
<dbReference type="DrugBank" id="DB16236">
    <property type="generic name" value="Mitapivat"/>
</dbReference>
<dbReference type="DrugBank" id="DB05749">
    <property type="generic name" value="MPI-674"/>
</dbReference>
<dbReference type="DrugBank" id="DB08804">
    <property type="generic name" value="Nandrolone decanoate"/>
</dbReference>
<dbReference type="DrugBank" id="DB03467">
    <property type="generic name" value="Naringenin"/>
</dbReference>
<dbReference type="DrugBank" id="DB00184">
    <property type="generic name" value="Nicotine"/>
</dbReference>
<dbReference type="DrugBank" id="DB09389">
    <property type="generic name" value="Norgestrel"/>
</dbReference>
<dbReference type="DrugBank" id="DB01229">
    <property type="generic name" value="Paclitaxel"/>
</dbReference>
<dbReference type="DrugBank" id="DB05804">
    <property type="generic name" value="Prasterone sulfate"/>
</dbReference>
<dbReference type="DrugBank" id="DB00481">
    <property type="generic name" value="Raloxifene"/>
</dbReference>
<dbReference type="DrugBank" id="DB05875">
    <property type="generic name" value="Sar9, Met (O2)11-Substance P"/>
</dbReference>
<dbReference type="DrugBank" id="DB02901">
    <property type="generic name" value="Stanolone"/>
</dbReference>
<dbReference type="DrugBank" id="DB06147">
    <property type="generic name" value="Sulfathiazole"/>
</dbReference>
<dbReference type="DrugBank" id="DB00675">
    <property type="generic name" value="Tamoxifen"/>
</dbReference>
<dbReference type="DrugBank" id="DB00894">
    <property type="generic name" value="Testolactone"/>
</dbReference>
<dbReference type="DrugBank" id="DB00624">
    <property type="generic name" value="Testosterone"/>
</dbReference>
<dbReference type="DrugBank" id="DB13943">
    <property type="generic name" value="Testosterone cypionate"/>
</dbReference>
<dbReference type="DrugBank" id="DB13944">
    <property type="generic name" value="Testosterone enanthate"/>
</dbReference>
<dbReference type="DrugBank" id="DB13946">
    <property type="generic name" value="Testosterone undecanoate"/>
</dbReference>
<dbReference type="DrugBank" id="DB01007">
    <property type="generic name" value="Tioconazole"/>
</dbReference>
<dbReference type="DrugBank" id="DB00197">
    <property type="generic name" value="Troglitazone"/>
</dbReference>
<dbReference type="DrugBank" id="DB13767">
    <property type="generic name" value="Vorozole"/>
</dbReference>
<dbReference type="DrugCentral" id="P11511"/>
<dbReference type="GuidetoPHARMACOLOGY" id="1362"/>
<dbReference type="SwissLipids" id="SLP:000001716"/>
<dbReference type="iPTMnet" id="P11511"/>
<dbReference type="PhosphoSitePlus" id="P11511"/>
<dbReference type="BioMuta" id="CYP19A1"/>
<dbReference type="DMDM" id="117293"/>
<dbReference type="jPOST" id="P11511"/>
<dbReference type="MassIVE" id="P11511"/>
<dbReference type="PaxDb" id="9606-ENSP00000379683"/>
<dbReference type="PeptideAtlas" id="P11511"/>
<dbReference type="ProteomicsDB" id="52787">
    <molecule id="P11511-1"/>
</dbReference>
<dbReference type="ProteomicsDB" id="71189"/>
<dbReference type="ABCD" id="P11511">
    <property type="antibodies" value="1 sequenced antibody"/>
</dbReference>
<dbReference type="Antibodypedia" id="4371">
    <property type="antibodies" value="651 antibodies from 40 providers"/>
</dbReference>
<dbReference type="DNASU" id="1588"/>
<dbReference type="Ensembl" id="ENST00000396402.6">
    <molecule id="P11511-1"/>
    <property type="protein sequence ID" value="ENSP00000379683.1"/>
    <property type="gene ID" value="ENSG00000137869.16"/>
</dbReference>
<dbReference type="Ensembl" id="ENST00000396404.8">
    <molecule id="P11511-1"/>
    <property type="protein sequence ID" value="ENSP00000379685.4"/>
    <property type="gene ID" value="ENSG00000137869.16"/>
</dbReference>
<dbReference type="Ensembl" id="ENST00000405913.7">
    <molecule id="P11511-2"/>
    <property type="protein sequence ID" value="ENSP00000383930.3"/>
    <property type="gene ID" value="ENSG00000137869.16"/>
</dbReference>
<dbReference type="Ensembl" id="ENST00000557858.5">
    <molecule id="P11511-2"/>
    <property type="protein sequence ID" value="ENSP00000452627.1"/>
    <property type="gene ID" value="ENSG00000137869.16"/>
</dbReference>
<dbReference type="Ensembl" id="ENST00000559878.5">
    <molecule id="P11511-1"/>
    <property type="protein sequence ID" value="ENSP00000453149.1"/>
    <property type="gene ID" value="ENSG00000137869.16"/>
</dbReference>
<dbReference type="GeneID" id="1588"/>
<dbReference type="KEGG" id="hsa:1588"/>
<dbReference type="MANE-Select" id="ENST00000396402.6">
    <property type="protein sequence ID" value="ENSP00000379683.1"/>
    <property type="RefSeq nucleotide sequence ID" value="NM_000103.4"/>
    <property type="RefSeq protein sequence ID" value="NP_000094.2"/>
</dbReference>
<dbReference type="UCSC" id="uc001zyz.5">
    <molecule id="P11511-1"/>
    <property type="organism name" value="human"/>
</dbReference>
<dbReference type="AGR" id="HGNC:2594"/>
<dbReference type="CTD" id="1588"/>
<dbReference type="DisGeNET" id="1588"/>
<dbReference type="GeneCards" id="CYP19A1"/>
<dbReference type="HGNC" id="HGNC:2594">
    <property type="gene designation" value="CYP19A1"/>
</dbReference>
<dbReference type="HPA" id="ENSG00000137869">
    <property type="expression patterns" value="Tissue enriched (placenta)"/>
</dbReference>
<dbReference type="MalaCards" id="CYP19A1"/>
<dbReference type="MIM" id="107910">
    <property type="type" value="gene"/>
</dbReference>
<dbReference type="MIM" id="139300">
    <property type="type" value="phenotype"/>
</dbReference>
<dbReference type="MIM" id="613546">
    <property type="type" value="phenotype"/>
</dbReference>
<dbReference type="neXtProt" id="NX_P11511"/>
<dbReference type="OpenTargets" id="ENSG00000137869"/>
<dbReference type="Orphanet" id="91">
    <property type="disease" value="Aromatase deficiency"/>
</dbReference>
<dbReference type="Orphanet" id="178345">
    <property type="disease" value="Aromatase excess syndrome"/>
</dbReference>
<dbReference type="PharmGKB" id="PA27091"/>
<dbReference type="VEuPathDB" id="HostDB:ENSG00000137869"/>
<dbReference type="eggNOG" id="KOG0157">
    <property type="taxonomic scope" value="Eukaryota"/>
</dbReference>
<dbReference type="GeneTree" id="ENSGT00840000129915"/>
<dbReference type="HOGENOM" id="CLU_041874_0_0_1"/>
<dbReference type="InParanoid" id="P11511"/>
<dbReference type="OMA" id="LMRCIML"/>
<dbReference type="OrthoDB" id="1470350at2759"/>
<dbReference type="PAN-GO" id="P11511">
    <property type="GO annotations" value="4 GO annotations based on evolutionary models"/>
</dbReference>
<dbReference type="PhylomeDB" id="P11511"/>
<dbReference type="TreeFam" id="TF352039"/>
<dbReference type="BioCyc" id="MetaCyc:HS06413-MONOMER"/>
<dbReference type="BRENDA" id="1.14.14.14">
    <property type="organism ID" value="2681"/>
</dbReference>
<dbReference type="PathwayCommons" id="P11511"/>
<dbReference type="Reactome" id="R-HSA-193144">
    <property type="pathway name" value="Estrogen biosynthesis"/>
</dbReference>
<dbReference type="Reactome" id="R-HSA-211976">
    <property type="pathway name" value="Endogenous sterols"/>
</dbReference>
<dbReference type="Reactome" id="R-HSA-5579030">
    <property type="pathway name" value="Defective CYP19A1 causes AEXS"/>
</dbReference>
<dbReference type="SABIO-RK" id="P11511"/>
<dbReference type="SignaLink" id="P11511"/>
<dbReference type="SIGNOR" id="P11511"/>
<dbReference type="BioGRID-ORCS" id="1588">
    <property type="hits" value="8 hits in 1156 CRISPR screens"/>
</dbReference>
<dbReference type="ChiTaRS" id="CYP19A1">
    <property type="organism name" value="human"/>
</dbReference>
<dbReference type="EvolutionaryTrace" id="P11511"/>
<dbReference type="GeneWiki" id="Aromatase"/>
<dbReference type="GenomeRNAi" id="1588"/>
<dbReference type="Pharos" id="P11511">
    <property type="development level" value="Tclin"/>
</dbReference>
<dbReference type="PRO" id="PR:P11511"/>
<dbReference type="Proteomes" id="UP000005640">
    <property type="component" value="Chromosome 15"/>
</dbReference>
<dbReference type="RNAct" id="P11511">
    <property type="molecule type" value="protein"/>
</dbReference>
<dbReference type="Bgee" id="ENSG00000137869">
    <property type="expression patterns" value="Expressed in placenta and 102 other cell types or tissues"/>
</dbReference>
<dbReference type="ExpressionAtlas" id="P11511">
    <property type="expression patterns" value="baseline and differential"/>
</dbReference>
<dbReference type="GO" id="GO:0005783">
    <property type="term" value="C:endoplasmic reticulum"/>
    <property type="evidence" value="ECO:0000314"/>
    <property type="project" value="LIFEdb"/>
</dbReference>
<dbReference type="GO" id="GO:0005789">
    <property type="term" value="C:endoplasmic reticulum membrane"/>
    <property type="evidence" value="ECO:0000304"/>
    <property type="project" value="Reactome"/>
</dbReference>
<dbReference type="GO" id="GO:0016020">
    <property type="term" value="C:membrane"/>
    <property type="evidence" value="ECO:0000304"/>
    <property type="project" value="ProtInc"/>
</dbReference>
<dbReference type="GO" id="GO:0070330">
    <property type="term" value="F:aromatase activity"/>
    <property type="evidence" value="ECO:0000314"/>
    <property type="project" value="UniProtKB"/>
</dbReference>
<dbReference type="GO" id="GO:0009055">
    <property type="term" value="F:electron transfer activity"/>
    <property type="evidence" value="ECO:0000304"/>
    <property type="project" value="UniProtKB"/>
</dbReference>
<dbReference type="GO" id="GO:0101021">
    <property type="term" value="F:estrogen 2-hydroxylase activity"/>
    <property type="evidence" value="ECO:0007669"/>
    <property type="project" value="RHEA"/>
</dbReference>
<dbReference type="GO" id="GO:0020037">
    <property type="term" value="F:heme binding"/>
    <property type="evidence" value="ECO:0000314"/>
    <property type="project" value="UniProtKB"/>
</dbReference>
<dbReference type="GO" id="GO:0005506">
    <property type="term" value="F:iron ion binding"/>
    <property type="evidence" value="ECO:0007669"/>
    <property type="project" value="InterPro"/>
</dbReference>
<dbReference type="GO" id="GO:0016712">
    <property type="term" value="F:oxidoreductase activity, acting on paired donors, with incorporation or reduction of molecular oxygen, reduced flavin or flavoprotein as one donor, and incorporation of one atom of oxygen"/>
    <property type="evidence" value="ECO:0000304"/>
    <property type="project" value="UniProtKB"/>
</dbReference>
<dbReference type="GO" id="GO:0019825">
    <property type="term" value="F:oxygen binding"/>
    <property type="evidence" value="ECO:0000304"/>
    <property type="project" value="ProtInc"/>
</dbReference>
<dbReference type="GO" id="GO:0008395">
    <property type="term" value="F:steroid hydroxylase activity"/>
    <property type="evidence" value="ECO:0000304"/>
    <property type="project" value="Reactome"/>
</dbReference>
<dbReference type="GO" id="GO:0006710">
    <property type="term" value="P:androgen catabolic process"/>
    <property type="evidence" value="ECO:0000314"/>
    <property type="project" value="CAFA"/>
</dbReference>
<dbReference type="GO" id="GO:0006703">
    <property type="term" value="P:estrogen biosynthetic process"/>
    <property type="evidence" value="ECO:0000304"/>
    <property type="project" value="Reactome"/>
</dbReference>
<dbReference type="GO" id="GO:0030540">
    <property type="term" value="P:female genitalia development"/>
    <property type="evidence" value="ECO:0007669"/>
    <property type="project" value="Ensembl"/>
</dbReference>
<dbReference type="GO" id="GO:0008585">
    <property type="term" value="P:female gonad development"/>
    <property type="evidence" value="ECO:0000318"/>
    <property type="project" value="GO_Central"/>
</dbReference>
<dbReference type="GO" id="GO:0030879">
    <property type="term" value="P:mammary gland development"/>
    <property type="evidence" value="ECO:0007669"/>
    <property type="project" value="Ensembl"/>
</dbReference>
<dbReference type="GO" id="GO:0002677">
    <property type="term" value="P:negative regulation of chronic inflammatory response"/>
    <property type="evidence" value="ECO:0007669"/>
    <property type="project" value="Ensembl"/>
</dbReference>
<dbReference type="GO" id="GO:0010760">
    <property type="term" value="P:negative regulation of macrophage chemotaxis"/>
    <property type="evidence" value="ECO:0007669"/>
    <property type="project" value="Ensembl"/>
</dbReference>
<dbReference type="GO" id="GO:2000866">
    <property type="term" value="P:positive regulation of estradiol secretion"/>
    <property type="evidence" value="ECO:0000314"/>
    <property type="project" value="CAFA"/>
</dbReference>
<dbReference type="GO" id="GO:0060736">
    <property type="term" value="P:prostate gland growth"/>
    <property type="evidence" value="ECO:0007669"/>
    <property type="project" value="Ensembl"/>
</dbReference>
<dbReference type="GO" id="GO:0032355">
    <property type="term" value="P:response to estradiol"/>
    <property type="evidence" value="ECO:0000318"/>
    <property type="project" value="GO_Central"/>
</dbReference>
<dbReference type="GO" id="GO:0006694">
    <property type="term" value="P:steroid biosynthetic process"/>
    <property type="evidence" value="ECO:0000304"/>
    <property type="project" value="ProtInc"/>
</dbReference>
<dbReference type="GO" id="GO:0016125">
    <property type="term" value="P:sterol metabolic process"/>
    <property type="evidence" value="ECO:0000304"/>
    <property type="project" value="Reactome"/>
</dbReference>
<dbReference type="GO" id="GO:0006949">
    <property type="term" value="P:syncytium formation"/>
    <property type="evidence" value="ECO:0000304"/>
    <property type="project" value="ARUK-UCL"/>
</dbReference>
<dbReference type="GO" id="GO:0061370">
    <property type="term" value="P:testosterone biosynthetic process"/>
    <property type="evidence" value="ECO:0007669"/>
    <property type="project" value="Ensembl"/>
</dbReference>
<dbReference type="GO" id="GO:0060065">
    <property type="term" value="P:uterus development"/>
    <property type="evidence" value="ECO:0007669"/>
    <property type="project" value="Ensembl"/>
</dbReference>
<dbReference type="CDD" id="cd20616">
    <property type="entry name" value="CYP19A1"/>
    <property type="match status" value="1"/>
</dbReference>
<dbReference type="FunFam" id="1.10.630.10:FF:000032">
    <property type="entry name" value="Cytochrome P450 aromatase"/>
    <property type="match status" value="1"/>
</dbReference>
<dbReference type="Gene3D" id="1.10.630.10">
    <property type="entry name" value="Cytochrome P450"/>
    <property type="match status" value="1"/>
</dbReference>
<dbReference type="InterPro" id="IPR001128">
    <property type="entry name" value="Cyt_P450"/>
</dbReference>
<dbReference type="InterPro" id="IPR017972">
    <property type="entry name" value="Cyt_P450_CS"/>
</dbReference>
<dbReference type="InterPro" id="IPR002401">
    <property type="entry name" value="Cyt_P450_E_grp-I"/>
</dbReference>
<dbReference type="InterPro" id="IPR036396">
    <property type="entry name" value="Cyt_P450_sf"/>
</dbReference>
<dbReference type="InterPro" id="IPR050196">
    <property type="entry name" value="Cytochrome_P450_Monoox"/>
</dbReference>
<dbReference type="PANTHER" id="PTHR24291:SF43">
    <property type="entry name" value="AROMATASE"/>
    <property type="match status" value="1"/>
</dbReference>
<dbReference type="PANTHER" id="PTHR24291">
    <property type="entry name" value="CYTOCHROME P450 FAMILY 4"/>
    <property type="match status" value="1"/>
</dbReference>
<dbReference type="Pfam" id="PF00067">
    <property type="entry name" value="p450"/>
    <property type="match status" value="1"/>
</dbReference>
<dbReference type="PRINTS" id="PR00463">
    <property type="entry name" value="EP450I"/>
</dbReference>
<dbReference type="PRINTS" id="PR00385">
    <property type="entry name" value="P450"/>
</dbReference>
<dbReference type="SUPFAM" id="SSF48264">
    <property type="entry name" value="Cytochrome P450"/>
    <property type="match status" value="1"/>
</dbReference>
<dbReference type="PROSITE" id="PS00086">
    <property type="entry name" value="CYTOCHROME_P450"/>
    <property type="match status" value="1"/>
</dbReference>
<evidence type="ECO:0000255" key="1"/>
<evidence type="ECO:0000269" key="2">
    <source>
    </source>
</evidence>
<evidence type="ECO:0000269" key="3">
    <source>
    </source>
</evidence>
<evidence type="ECO:0000269" key="4">
    <source>
    </source>
</evidence>
<evidence type="ECO:0000269" key="5">
    <source>
    </source>
</evidence>
<evidence type="ECO:0000269" key="6">
    <source>
    </source>
</evidence>
<evidence type="ECO:0000269" key="7">
    <source>
    </source>
</evidence>
<evidence type="ECO:0000269" key="8">
    <source>
    </source>
</evidence>
<evidence type="ECO:0000269" key="9">
    <source>
    </source>
</evidence>
<evidence type="ECO:0000269" key="10">
    <source>
    </source>
</evidence>
<evidence type="ECO:0000269" key="11">
    <source>
    </source>
</evidence>
<evidence type="ECO:0000269" key="12">
    <source>
    </source>
</evidence>
<evidence type="ECO:0000269" key="13">
    <source>
    </source>
</evidence>
<evidence type="ECO:0000269" key="14">
    <source>
    </source>
</evidence>
<evidence type="ECO:0000269" key="15">
    <source>
    </source>
</evidence>
<evidence type="ECO:0000269" key="16">
    <source>
    </source>
</evidence>
<evidence type="ECO:0000269" key="17">
    <source>
    </source>
</evidence>
<evidence type="ECO:0000269" key="18">
    <source>
    </source>
</evidence>
<evidence type="ECO:0000269" key="19">
    <source>
    </source>
</evidence>
<evidence type="ECO:0000269" key="20">
    <source>
    </source>
</evidence>
<evidence type="ECO:0000269" key="21">
    <source>
    </source>
</evidence>
<evidence type="ECO:0000269" key="22">
    <source ref="8"/>
</evidence>
<evidence type="ECO:0000303" key="23">
    <source>
    </source>
</evidence>
<evidence type="ECO:0000303" key="24">
    <source>
    </source>
</evidence>
<evidence type="ECO:0000303" key="25">
    <source>
    </source>
</evidence>
<evidence type="ECO:0000305" key="26"/>
<evidence type="ECO:0000305" key="27">
    <source>
    </source>
</evidence>
<evidence type="ECO:0000305" key="28">
    <source>
    </source>
</evidence>
<evidence type="ECO:0000305" key="29">
    <source>
    </source>
</evidence>
<evidence type="ECO:0000305" key="30">
    <source>
    </source>
</evidence>
<evidence type="ECO:0000312" key="31">
    <source>
        <dbReference type="HGNC" id="HGNC:2594"/>
    </source>
</evidence>
<evidence type="ECO:0007744" key="32">
    <source>
        <dbReference type="PDB" id="3EQM"/>
    </source>
</evidence>
<evidence type="ECO:0007829" key="33">
    <source>
        <dbReference type="PDB" id="3EQM"/>
    </source>
</evidence>
<evidence type="ECO:0007829" key="34">
    <source>
        <dbReference type="PDB" id="3S79"/>
    </source>
</evidence>
<evidence type="ECO:0007829" key="35">
    <source>
        <dbReference type="PDB" id="4KQ8"/>
    </source>
</evidence>
<evidence type="ECO:0007829" key="36">
    <source>
        <dbReference type="PDB" id="5JKW"/>
    </source>
</evidence>
<evidence type="ECO:0007829" key="37">
    <source>
        <dbReference type="PDB" id="5JL6"/>
    </source>
</evidence>
<name>CP19A_HUMAN</name>
<organism>
    <name type="scientific">Homo sapiens</name>
    <name type="common">Human</name>
    <dbReference type="NCBI Taxonomy" id="9606"/>
    <lineage>
        <taxon>Eukaryota</taxon>
        <taxon>Metazoa</taxon>
        <taxon>Chordata</taxon>
        <taxon>Craniata</taxon>
        <taxon>Vertebrata</taxon>
        <taxon>Euteleostomi</taxon>
        <taxon>Mammalia</taxon>
        <taxon>Eutheria</taxon>
        <taxon>Euarchontoglires</taxon>
        <taxon>Primates</taxon>
        <taxon>Haplorrhini</taxon>
        <taxon>Catarrhini</taxon>
        <taxon>Hominidae</taxon>
        <taxon>Homo</taxon>
    </lineage>
</organism>
<sequence>MVLEMLNPIHYNITSIVPEAMPAATMPVLLLTGLFLLVWNYEGTSSIPGPGYCMGIGPLISHGRFLWMGIGSACNYYNRVYGEFMRVWISGEETLIISKSSSMFHIMKHNHYSSRFGSKLGLQCIGMHEKGIIFNNNPELWKTTRPFFMKALSGPGLVRMVTVCAESLKTHLDRLEEVTNESGYVDVLTLLRRVMLDTSNTLFLRIPLDESAIVVKIQGYFDAWQALLIKPDIFFKISWLYKKYEKSVKDLKDAIEVLIAEKRRRISTEEKLEECMDFATELILAEKRGDLTRENVNQCILEMLIAAPDTMSVSLFFMLFLIAKHPNVEEAIIKEIQTVIGERDIKIDDIQKLKVMENFIYESMRYQPVVDLVMRKALEDDVIDGYPVKKGTNIILNIGRMHRLEFFPKPNEFTLENFAKNVPYRYFQPFGFGPRGCAGKYIAMVMMKAILVTLLRRFHVKTLQGQCVESIQKIHDLSLHPDETKNMLEMIFTPRNSDRCLEH</sequence>
<comment type="function">
    <text evidence="6 8 11 12">A cytochrome P450 monooxygenase that catalyzes the conversion of C19 androgens, androst-4-ene-3,17-dione (androstenedione) and testosterone to the C18 estrogens, estrone and estradiol, respectively (PubMed:27702664, PubMed:2848247). Catalyzes three successive oxidations of C19 androgens: two conventional oxidations at C19 yielding 19-hydroxy and 19-oxo/19-aldehyde derivatives, followed by a third oxidative aromatization step that involves C1-beta hydrogen abstraction combined with cleavage of the C10-C19 bond to yield a phenolic A ring and formic acid (PubMed:20385561). Alternatively, the third oxidative reaction yields a 19-norsteroid and formic acid. Converts dihydrotestosterone to delta1,10-dehydro 19-nordihydrotestosterone and may play a role in homeostasis of this potent androgen (PubMed:22773874). Also displays 2-hydroxylase activity toward estrone (PubMed:22773874). Mechanistically, uses molecular oxygen inserting one oxygen atom into a substrate, and reducing the second into a water molecule, with two electrons provided by NADPH via cytochrome P450 reductase (CPR; NADPH-ferrihemoprotein reductase) (PubMed:20385561, PubMed:22773874).</text>
</comment>
<comment type="catalytic activity">
    <reaction evidence="12">
        <text>testosterone + 3 reduced [NADPH--hemoprotein reductase] + 3 O2 = 17beta-estradiol + formate + 3 oxidized [NADPH--hemoprotein reductase] + 4 H2O + 4 H(+)</text>
        <dbReference type="Rhea" id="RHEA:38191"/>
        <dbReference type="Rhea" id="RHEA-COMP:11964"/>
        <dbReference type="Rhea" id="RHEA-COMP:11965"/>
        <dbReference type="ChEBI" id="CHEBI:15377"/>
        <dbReference type="ChEBI" id="CHEBI:15378"/>
        <dbReference type="ChEBI" id="CHEBI:15379"/>
        <dbReference type="ChEBI" id="CHEBI:15740"/>
        <dbReference type="ChEBI" id="CHEBI:16469"/>
        <dbReference type="ChEBI" id="CHEBI:17347"/>
        <dbReference type="ChEBI" id="CHEBI:57618"/>
        <dbReference type="ChEBI" id="CHEBI:58210"/>
        <dbReference type="EC" id="1.14.14.14"/>
    </reaction>
    <physiologicalReaction direction="left-to-right" evidence="30">
        <dbReference type="Rhea" id="RHEA:38192"/>
    </physiologicalReaction>
</comment>
<comment type="catalytic activity">
    <reaction evidence="11 12">
        <text>androst-4-ene-3,17-dione + 3 reduced [NADPH--hemoprotein reductase] + 3 O2 = estrone + formate + 3 oxidized [NADPH--hemoprotein reductase] + 4 H2O + 4 H(+)</text>
        <dbReference type="Rhea" id="RHEA:38195"/>
        <dbReference type="Rhea" id="RHEA-COMP:11964"/>
        <dbReference type="Rhea" id="RHEA-COMP:11965"/>
        <dbReference type="ChEBI" id="CHEBI:15377"/>
        <dbReference type="ChEBI" id="CHEBI:15378"/>
        <dbReference type="ChEBI" id="CHEBI:15379"/>
        <dbReference type="ChEBI" id="CHEBI:15740"/>
        <dbReference type="ChEBI" id="CHEBI:16422"/>
        <dbReference type="ChEBI" id="CHEBI:17263"/>
        <dbReference type="ChEBI" id="CHEBI:57618"/>
        <dbReference type="ChEBI" id="CHEBI:58210"/>
        <dbReference type="EC" id="1.14.14.14"/>
    </reaction>
    <physiologicalReaction direction="left-to-right" evidence="29 30">
        <dbReference type="Rhea" id="RHEA:38196"/>
    </physiologicalReaction>
</comment>
<comment type="catalytic activity">
    <reaction evidence="6">
        <text>androst-4-ene-3,17-dione + reduced [NADPH--hemoprotein reductase] + O2 = 19-hydroxyandrost-4-ene-3,17-dione + oxidized [NADPH--hemoprotein reductase] + H2O + H(+)</text>
        <dbReference type="Rhea" id="RHEA:38199"/>
        <dbReference type="Rhea" id="RHEA-COMP:11964"/>
        <dbReference type="Rhea" id="RHEA-COMP:11965"/>
        <dbReference type="ChEBI" id="CHEBI:15377"/>
        <dbReference type="ChEBI" id="CHEBI:15378"/>
        <dbReference type="ChEBI" id="CHEBI:15379"/>
        <dbReference type="ChEBI" id="CHEBI:16422"/>
        <dbReference type="ChEBI" id="CHEBI:27576"/>
        <dbReference type="ChEBI" id="CHEBI:57618"/>
        <dbReference type="ChEBI" id="CHEBI:58210"/>
    </reaction>
    <physiologicalReaction direction="left-to-right" evidence="27">
        <dbReference type="Rhea" id="RHEA:38200"/>
    </physiologicalReaction>
</comment>
<comment type="catalytic activity">
    <reaction evidence="6">
        <text>19-hydroxyandrost-4-ene-3,17-dione + reduced [NADPH--hemoprotein reductase] + O2 = 19-oxo-androst-4-ene-3,17-dione + oxidized [NADPH--hemoprotein reductase] + 2 H2O + H(+)</text>
        <dbReference type="Rhea" id="RHEA:38203"/>
        <dbReference type="Rhea" id="RHEA-COMP:11964"/>
        <dbReference type="Rhea" id="RHEA-COMP:11965"/>
        <dbReference type="ChEBI" id="CHEBI:799"/>
        <dbReference type="ChEBI" id="CHEBI:15377"/>
        <dbReference type="ChEBI" id="CHEBI:15378"/>
        <dbReference type="ChEBI" id="CHEBI:15379"/>
        <dbReference type="ChEBI" id="CHEBI:27576"/>
        <dbReference type="ChEBI" id="CHEBI:57618"/>
        <dbReference type="ChEBI" id="CHEBI:58210"/>
    </reaction>
    <physiologicalReaction direction="left-to-right" evidence="27">
        <dbReference type="Rhea" id="RHEA:38204"/>
    </physiologicalReaction>
</comment>
<comment type="catalytic activity">
    <reaction evidence="6">
        <text>19-oxo-androst-4-ene-3,17-dione + reduced [NADPH--hemoprotein reductase] + O2 = estrone + formate + oxidized [NADPH--hemoprotein reductase] + H2O + 2 H(+)</text>
        <dbReference type="Rhea" id="RHEA:38207"/>
        <dbReference type="Rhea" id="RHEA-COMP:11964"/>
        <dbReference type="Rhea" id="RHEA-COMP:11965"/>
        <dbReference type="ChEBI" id="CHEBI:799"/>
        <dbReference type="ChEBI" id="CHEBI:15377"/>
        <dbReference type="ChEBI" id="CHEBI:15378"/>
        <dbReference type="ChEBI" id="CHEBI:15379"/>
        <dbReference type="ChEBI" id="CHEBI:15740"/>
        <dbReference type="ChEBI" id="CHEBI:17263"/>
        <dbReference type="ChEBI" id="CHEBI:57618"/>
        <dbReference type="ChEBI" id="CHEBI:58210"/>
    </reaction>
    <physiologicalReaction direction="left-to-right" evidence="27">
        <dbReference type="Rhea" id="RHEA:38208"/>
    </physiologicalReaction>
</comment>
<comment type="catalytic activity">
    <reaction evidence="8">
        <text>estrone + reduced [NADPH--hemoprotein reductase] + O2 = 2-hydroxyestrone + oxidized [NADPH--hemoprotein reductase] + H2O + H(+)</text>
        <dbReference type="Rhea" id="RHEA:47208"/>
        <dbReference type="Rhea" id="RHEA-COMP:11964"/>
        <dbReference type="Rhea" id="RHEA-COMP:11965"/>
        <dbReference type="ChEBI" id="CHEBI:1156"/>
        <dbReference type="ChEBI" id="CHEBI:15377"/>
        <dbReference type="ChEBI" id="CHEBI:15378"/>
        <dbReference type="ChEBI" id="CHEBI:15379"/>
        <dbReference type="ChEBI" id="CHEBI:17263"/>
        <dbReference type="ChEBI" id="CHEBI:57618"/>
        <dbReference type="ChEBI" id="CHEBI:58210"/>
    </reaction>
    <physiologicalReaction direction="left-to-right" evidence="28">
        <dbReference type="Rhea" id="RHEA:47209"/>
    </physiologicalReaction>
</comment>
<comment type="catalytic activity">
    <reaction evidence="8">
        <text>17beta-hydroxy-5alpha-androstan-3-one + reduced [NADPH--hemoprotein reductase] + O2 = 17beta,19-dihydroxy-3-oxo-5alpha-androstanone + oxidized [NADPH--hemoprotein reductase] + H2O + H(+)</text>
        <dbReference type="Rhea" id="RHEA:53200"/>
        <dbReference type="Rhea" id="RHEA-COMP:11964"/>
        <dbReference type="Rhea" id="RHEA-COMP:11965"/>
        <dbReference type="ChEBI" id="CHEBI:15377"/>
        <dbReference type="ChEBI" id="CHEBI:15378"/>
        <dbReference type="ChEBI" id="CHEBI:15379"/>
        <dbReference type="ChEBI" id="CHEBI:16330"/>
        <dbReference type="ChEBI" id="CHEBI:57618"/>
        <dbReference type="ChEBI" id="CHEBI:58210"/>
        <dbReference type="ChEBI" id="CHEBI:137031"/>
    </reaction>
    <physiologicalReaction direction="left-to-right" evidence="28">
        <dbReference type="Rhea" id="RHEA:53201"/>
    </physiologicalReaction>
</comment>
<comment type="catalytic activity">
    <reaction evidence="8">
        <text>17beta,19-dihydroxy-3-oxo-5alpha-androstanone + reduced [NADPH--hemoprotein reductase] + O2 = 17beta-hydroxy-3,19-dioxo-5alpha-androstanone + oxidized [NADPH--hemoprotein reductase] + 2 H2O + H(+)</text>
        <dbReference type="Rhea" id="RHEA:53204"/>
        <dbReference type="Rhea" id="RHEA-COMP:11964"/>
        <dbReference type="Rhea" id="RHEA-COMP:11965"/>
        <dbReference type="ChEBI" id="CHEBI:15377"/>
        <dbReference type="ChEBI" id="CHEBI:15378"/>
        <dbReference type="ChEBI" id="CHEBI:15379"/>
        <dbReference type="ChEBI" id="CHEBI:57618"/>
        <dbReference type="ChEBI" id="CHEBI:58210"/>
        <dbReference type="ChEBI" id="CHEBI:137031"/>
        <dbReference type="ChEBI" id="CHEBI:137032"/>
    </reaction>
    <physiologicalReaction direction="left-to-right" evidence="28">
        <dbReference type="Rhea" id="RHEA:53205"/>
    </physiologicalReaction>
</comment>
<comment type="catalytic activity">
    <reaction evidence="8">
        <text>17beta-hydroxy-3,19-dioxo-5alpha-androstanone + reduced [NADPH--hemoprotein reductase] + O2 = 17beta-hydroxy-3-oxo-19-nor-5alpha-androst-1-ene + formate + oxidized [NADPH--hemoprotein reductase] + H2O + 2 H(+)</text>
        <dbReference type="Rhea" id="RHEA:53276"/>
        <dbReference type="Rhea" id="RHEA-COMP:11964"/>
        <dbReference type="Rhea" id="RHEA-COMP:11965"/>
        <dbReference type="ChEBI" id="CHEBI:15377"/>
        <dbReference type="ChEBI" id="CHEBI:15378"/>
        <dbReference type="ChEBI" id="CHEBI:15379"/>
        <dbReference type="ChEBI" id="CHEBI:15740"/>
        <dbReference type="ChEBI" id="CHEBI:57618"/>
        <dbReference type="ChEBI" id="CHEBI:58210"/>
        <dbReference type="ChEBI" id="CHEBI:137032"/>
        <dbReference type="ChEBI" id="CHEBI:137110"/>
    </reaction>
    <physiologicalReaction direction="left-to-right" evidence="28">
        <dbReference type="Rhea" id="RHEA:53277"/>
    </physiologicalReaction>
</comment>
<comment type="cofactor">
    <cofactor evidence="5">
        <name>heme</name>
        <dbReference type="ChEBI" id="CHEBI:30413"/>
    </cofactor>
</comment>
<comment type="biophysicochemical properties">
    <kinetics>
        <KM evidence="11">0.46 uM for androst-4-ene-3,17-dione</KM>
        <KM evidence="6">0.044 uM for androst-4-ene-3,17-dione (19-hydroxylation)</KM>
        <KM evidence="6">21 uM for 19-hydroxyandrost-4-ene-3,17-dione</KM>
        <KM evidence="6">18 uM for 19-oxo-androst-4-ene-3,17-dione</KM>
        <KM evidence="8">2.7 uM for estrone (2-hydroxylation)</KM>
        <KM evidence="8">3.8 uM for 17beta-hydroxy-5alpha-androstan-3-one (19-hydroxylation)</KM>
        <KM evidence="8">3.2 uM for 17beta,19-dihydroxy-3-oxo-5alpha-androstanone</KM>
        <KM evidence="8">7.6 uM for 17beta-hydroxy-3,19-dioxo-5alpha-androstanone</KM>
        <text evidence="6 8">kcat is 0.060 sec(-1) with androst-4-ene-3,17-dione as substrate (PubMed:20385561). kcat is 0.13 sec(-1) with 19-oxo-androst-4-ene-3,17-dione (PubMed:20385561). kcat is 0.42 sec(-1) with androst-4-ene-3,17-dione as substrate (PubMed:20385561). kcat is 0.046 min(-1) with estrone as substrate (PubMed:22773874). kcat is 0.27 min(-1) with 17beta-hydroxy-5alpha-androstan-3-one as substrate (PubMed:22773874). kcat is 0.32 min(-1) with 17beta,19-dihydroxy-3-oxo-5alpha-androstanone as substrate (PubMed:22773874). kcat is 0.77 min(-1) with 17beta-hydroxy-3,19-dioxo-5alpha-androstanone as substrate (PubMed:22773874).</text>
    </kinetics>
</comment>
<comment type="pathway">
    <text evidence="6 8">Steroid hormone biosynthesis.</text>
</comment>
<comment type="subcellular location">
    <subcellularLocation>
        <location evidence="13">Endoplasmic reticulum membrane</location>
        <topology evidence="26">Multi-pass membrane protein</topology>
    </subcellularLocation>
    <subcellularLocation>
        <location evidence="13">Microsome membrane</location>
        <topology evidence="26">Multi-pass membrane protein</topology>
    </subcellularLocation>
</comment>
<comment type="alternative products">
    <event type="alternative splicing"/>
    <isoform>
        <id>P11511-1</id>
        <name>1</name>
        <sequence type="displayed"/>
    </isoform>
    <isoform>
        <id>P11511-2</id>
        <name>2</name>
        <sequence type="described" ref="VSP_055583 VSP_055584"/>
    </isoform>
</comment>
<comment type="tissue specificity">
    <text evidence="7 14 16 17">Widely expressed, including in adult and fetal brain, placenta, skin fibroblasts, adipose tissue and gonads.</text>
</comment>
<comment type="PTM">
    <text evidence="11">Phosphorylated in vitro by PKA and PKG/PRKG1. These phosphorylations inhibit the catalytic activity as measured by estrone synthesis from androstenedione (36% decrease for PKA and 30% for PKG/PRKG1).</text>
</comment>
<comment type="disease">
    <disease id="DI-01569">
        <name>Aromatase excess syndrome</name>
        <acronym>AEXS</acronym>
        <description>An autosomal dominant disorder characterized by increased extraglandular aromatization of steroids that presents with heterosexual precocity in males and isosexual precocity in females.</description>
        <dbReference type="MIM" id="139300"/>
    </disease>
    <text>The disease is caused by variants affecting the gene represented in this entry.</text>
</comment>
<comment type="disease" evidence="9 18 19 20">
    <disease id="DI-00134">
        <name>Aromatase deficiency</name>
        <acronym>AROD</acronym>
        <description>A rare disease in which fetal androgens are not converted into estrogens due to placental aromatase deficiency. Thus, pregnant women exhibit a hirsutism, which spontaneously resolves after post-partum. At birth, female babies present with pseudohermaphroditism due to virilization of extern genital organs. In adult females, manifestations include delay of puberty, breast hypoplasia and primary amenorrhoea with multicystic ovaries.</description>
        <dbReference type="MIM" id="613546"/>
    </disease>
    <text>The disease is caused by variants affecting the gene represented in this entry.</text>
</comment>
<comment type="similarity">
    <text evidence="26">Belongs to the cytochrome P450 family.</text>
</comment>
<comment type="online information" name="Wikipedia">
    <link uri="https://en.wikipedia.org/wiki/Aromatase"/>
    <text>Aromatase entry</text>
</comment>
<protein>
    <recommendedName>
        <fullName evidence="24">Aromatase</fullName>
        <ecNumber evidence="11 12">1.14.14.14</ecNumber>
    </recommendedName>
    <alternativeName>
        <fullName>CYPXIX</fullName>
    </alternativeName>
    <alternativeName>
        <fullName>Cytochrome P-450AROM</fullName>
    </alternativeName>
    <alternativeName>
        <fullName evidence="24">Cytochrome P450 19A1</fullName>
    </alternativeName>
    <alternativeName>
        <fullName>Estrogen synthase</fullName>
    </alternativeName>
</protein>
<feature type="chain" id="PRO_0000051955" description="Aromatase">
    <location>
        <begin position="1"/>
        <end position="503"/>
    </location>
</feature>
<feature type="transmembrane region" description="Helical" evidence="1">
    <location>
        <begin position="19"/>
        <end position="39"/>
    </location>
</feature>
<feature type="transmembrane region" description="Helical" evidence="1">
    <location>
        <begin position="303"/>
        <end position="323"/>
    </location>
</feature>
<feature type="binding site">
    <location>
        <position position="309"/>
    </location>
    <ligand>
        <name>substrate</name>
    </ligand>
</feature>
<feature type="binding site">
    <location>
        <position position="374"/>
    </location>
    <ligand>
        <name>substrate</name>
    </ligand>
</feature>
<feature type="binding site" description="axial binding residue" evidence="5 32">
    <location>
        <position position="437"/>
    </location>
    <ligand>
        <name>heme</name>
        <dbReference type="ChEBI" id="CHEBI:30413"/>
    </ligand>
    <ligandPart>
        <name>Fe</name>
        <dbReference type="ChEBI" id="CHEBI:18248"/>
    </ligandPart>
</feature>
<feature type="splice variant" id="VSP_055583" description="In isoform 2." evidence="23">
    <original>ESAIVVKIQ</original>
    <variation>GTEIFTLTS</variation>
    <location>
        <begin position="210"/>
        <end position="218"/>
    </location>
</feature>
<feature type="splice variant" id="VSP_055584" description="In isoform 2." evidence="23">
    <location>
        <begin position="219"/>
        <end position="503"/>
    </location>
</feature>
<feature type="sequence variant" id="VAR_023428" description="In dbSNP:rs2236722." evidence="2 22">
    <original>W</original>
    <variation>R</variation>
    <location>
        <position position="39"/>
    </location>
</feature>
<feature type="sequence variant" id="VAR_072784" description="In AROD; strongly reduced aromatase activity; 81% reduction of androstenedione metabolism compared to wild-type; dbSNP:rs765057534." evidence="9">
    <original>R</original>
    <variation>H</variation>
    <location>
        <position position="192"/>
    </location>
</feature>
<feature type="sequence variant" id="VAR_023429" description="In dbSNP:rs28757184." evidence="3 22">
    <original>T</original>
    <variation>M</variation>
    <location>
        <position position="201"/>
    </location>
</feature>
<feature type="sequence variant" id="VAR_018406" description="1.6 fold decrease in affinity for androstenedione substrate; slightly affects PKA-mediated reduction in catalytic activity as measured in vitro by estrone synthesis from androstenedione (49% decrease compared with 36% for the wild-type protein); no effect on PKG/PRKG1-mediated reduction in catalytic activity in vitro; dbSNP:rs700519." evidence="2 11 12 15 21 22">
    <original>R</original>
    <variation>C</variation>
    <location>
        <position position="264"/>
    </location>
</feature>
<feature type="sequence variant" id="VAR_077526" description="2.5 fold decrease in affinity for androstenedione substrate; slightly affects PKA-mediated reduction in catalytic activity as measured by estrone synthesis from androstenedione in vitro (28% decrease compared with 36% for the wild-type protein) and PKG/PRKG1-mediated reduction in catalytic activity in vitro (15% decrease compared with 30% for the wild-type protein); dbSNP:rs2304462." evidence="11">
    <original>R</original>
    <variation>H</variation>
    <location>
        <position position="264"/>
    </location>
</feature>
<feature type="sequence variant" id="VAR_079486" description="Found in deaf patients; uncertain significance." evidence="10">
    <original>S</original>
    <variation>P</variation>
    <location>
        <position position="314"/>
    </location>
</feature>
<feature type="sequence variant" id="VAR_016962" description="In AROD; 0.4% of wild-type activity; dbSNP:rs80051519." evidence="20">
    <original>R</original>
    <variation>Q</variation>
    <location>
        <position position="365"/>
    </location>
</feature>
<feature type="sequence variant" id="VAR_016963" description="In AROD; dbSNP:rs121434536." evidence="19">
    <original>R</original>
    <variation>C</variation>
    <location>
        <position position="375"/>
    </location>
</feature>
<feature type="sequence variant" id="VAR_054152" description="In dbSNP:rs762631156." evidence="4">
    <original>R</original>
    <variation>L</variation>
    <location>
        <position position="375"/>
    </location>
</feature>
<feature type="sequence variant" id="VAR_016964" description="In AROD; 1.1% of wild-type activity; dbSNP:rs121434534." evidence="18">
    <original>R</original>
    <variation>C</variation>
    <location>
        <position position="435"/>
    </location>
</feature>
<feature type="sequence variant" id="VAR_016965" description="In AROD; complete loss of activity; dbSNP:rs78310315." evidence="18">
    <original>C</original>
    <variation>Y</variation>
    <location>
        <position position="437"/>
    </location>
</feature>
<feature type="sequence conflict" description="In Ref. 1; AAA35557/CAA31929." evidence="26" ref="1">
    <original>N</original>
    <variation>S</variation>
    <location>
        <position position="496"/>
    </location>
</feature>
<feature type="strand" evidence="34">
    <location>
        <begin position="54"/>
        <end position="56"/>
    </location>
</feature>
<feature type="helix" evidence="34">
    <location>
        <begin position="57"/>
        <end position="68"/>
    </location>
</feature>
<feature type="helix" evidence="34">
    <location>
        <begin position="70"/>
        <end position="80"/>
    </location>
</feature>
<feature type="strand" evidence="34">
    <location>
        <begin position="83"/>
        <end position="97"/>
    </location>
</feature>
<feature type="helix" evidence="34">
    <location>
        <begin position="100"/>
        <end position="108"/>
    </location>
</feature>
<feature type="helix" evidence="34">
    <location>
        <begin position="110"/>
        <end position="112"/>
    </location>
</feature>
<feature type="helix" evidence="34">
    <location>
        <begin position="119"/>
        <end position="125"/>
    </location>
</feature>
<feature type="strand" evidence="34">
    <location>
        <begin position="130"/>
        <end position="132"/>
    </location>
</feature>
<feature type="helix" evidence="34">
    <location>
        <begin position="138"/>
        <end position="151"/>
    </location>
</feature>
<feature type="helix" evidence="34">
    <location>
        <begin position="155"/>
        <end position="172"/>
    </location>
</feature>
<feature type="helix" evidence="34">
    <location>
        <begin position="173"/>
        <end position="177"/>
    </location>
</feature>
<feature type="strand" evidence="36">
    <location>
        <begin position="183"/>
        <end position="185"/>
    </location>
</feature>
<feature type="helix" evidence="34">
    <location>
        <begin position="187"/>
        <end position="203"/>
    </location>
</feature>
<feature type="helix" evidence="34">
    <location>
        <begin position="210"/>
        <end position="227"/>
    </location>
</feature>
<feature type="helix" evidence="34">
    <location>
        <begin position="232"/>
        <end position="236"/>
    </location>
</feature>
<feature type="helix" evidence="34">
    <location>
        <begin position="238"/>
        <end position="240"/>
    </location>
</feature>
<feature type="helix" evidence="34">
    <location>
        <begin position="242"/>
        <end position="267"/>
    </location>
</feature>
<feature type="turn" evidence="34">
    <location>
        <begin position="270"/>
        <end position="275"/>
    </location>
</feature>
<feature type="helix" evidence="34">
    <location>
        <begin position="278"/>
        <end position="287"/>
    </location>
</feature>
<feature type="turn" evidence="33">
    <location>
        <begin position="288"/>
        <end position="290"/>
    </location>
</feature>
<feature type="helix" evidence="34">
    <location>
        <begin position="293"/>
        <end position="324"/>
    </location>
</feature>
<feature type="helix" evidence="34">
    <location>
        <begin position="326"/>
        <end position="339"/>
    </location>
</feature>
<feature type="turn" evidence="34">
    <location>
        <begin position="340"/>
        <end position="342"/>
    </location>
</feature>
<feature type="helix" evidence="34">
    <location>
        <begin position="347"/>
        <end position="349"/>
    </location>
</feature>
<feature type="turn" evidence="34">
    <location>
        <begin position="350"/>
        <end position="352"/>
    </location>
</feature>
<feature type="helix" evidence="34">
    <location>
        <begin position="354"/>
        <end position="366"/>
    </location>
</feature>
<feature type="strand" evidence="34">
    <location>
        <begin position="373"/>
        <end position="376"/>
    </location>
</feature>
<feature type="strand" evidence="34">
    <location>
        <begin position="381"/>
        <end position="383"/>
    </location>
</feature>
<feature type="strand" evidence="34">
    <location>
        <begin position="386"/>
        <end position="388"/>
    </location>
</feature>
<feature type="strand" evidence="34">
    <location>
        <begin position="393"/>
        <end position="396"/>
    </location>
</feature>
<feature type="helix" evidence="34">
    <location>
        <begin position="398"/>
        <end position="401"/>
    </location>
</feature>
<feature type="turn" evidence="34">
    <location>
        <begin position="402"/>
        <end position="404"/>
    </location>
</feature>
<feature type="helix" evidence="34">
    <location>
        <begin position="415"/>
        <end position="418"/>
    </location>
</feature>
<feature type="turn" evidence="34">
    <location>
        <begin position="424"/>
        <end position="426"/>
    </location>
</feature>
<feature type="helix" evidence="37">
    <location>
        <begin position="433"/>
        <end position="435"/>
    </location>
</feature>
<feature type="helix" evidence="34">
    <location>
        <begin position="440"/>
        <end position="455"/>
    </location>
</feature>
<feature type="strand" evidence="34">
    <location>
        <begin position="458"/>
        <end position="463"/>
    </location>
</feature>
<feature type="turn" evidence="34">
    <location>
        <begin position="468"/>
        <end position="470"/>
    </location>
</feature>
<feature type="strand" evidence="34">
    <location>
        <begin position="473"/>
        <end position="481"/>
    </location>
</feature>
<feature type="strand" evidence="35">
    <location>
        <begin position="483"/>
        <end position="485"/>
    </location>
</feature>
<feature type="strand" evidence="34">
    <location>
        <begin position="490"/>
        <end position="494"/>
    </location>
</feature>
<reference key="1">
    <citation type="journal article" date="1988" name="Biochem. Biophys. Res. Commun.">
        <title>Cloning of a complete cDNA encoding human aromatase: immunochemical identification and sequence analysis.</title>
        <authorList>
            <person name="Harada N."/>
        </authorList>
    </citation>
    <scope>NUCLEOTIDE SEQUENCE [MRNA] (ISOFORM 1)</scope>
    <scope>SUBCELLULAR LOCATION</scope>
    <source>
        <tissue>Placenta</tissue>
    </source>
</reference>
<reference key="2">
    <citation type="journal article" date="1988" name="DNA">
        <title>Human aromatase: cDNA cloning, Southern blot analysis, and assignment of the gene to chromosome 15.</title>
        <authorList>
            <person name="Chen S."/>
            <person name="Besman M.J."/>
            <person name="Sparkes R.S."/>
            <person name="Zollman S."/>
            <person name="Klisak I."/>
            <person name="Mohandas T."/>
            <person name="Hall P.F."/>
            <person name="Shively J.E."/>
        </authorList>
    </citation>
    <scope>NUCLEOTIDE SEQUENCE [MRNA] (ISOFORM 1)</scope>
</reference>
<reference key="3">
    <citation type="journal article" date="1988" name="Proc. Natl. Acad. Sci. U.S.A.">
        <title>Isolation of a full-length cDNA insert encoding human aromatase system cytochrome P-450 and its expression in nonsteroidogenic cells.</title>
        <authorList>
            <person name="Corbin C.J."/>
            <person name="Graham-Lorence S."/>
            <person name="McPhaul M."/>
            <person name="Mason J.I."/>
            <person name="Mendelson C.R."/>
            <person name="Simpson E.R."/>
        </authorList>
    </citation>
    <scope>NUCLEOTIDE SEQUENCE [MRNA] (ISOFORM 1)</scope>
    <scope>VARIANT CYS-264</scope>
    <scope>FUNCTION</scope>
    <scope>CATALYTIC ACTIVITY</scope>
</reference>
<reference key="4">
    <citation type="journal article" date="1989" name="FEBS Lett.">
        <title>Alternative usage of different poly(A) addition signals for two major species of mRNA encoding human aromatase P-450.</title>
        <authorList>
            <person name="Toda K."/>
            <person name="Terashima M."/>
            <person name="Mitsuuchi Y."/>
            <person name="Yamasaki Y."/>
            <person name="Yokoyama Y."/>
            <person name="Nojima S."/>
            <person name="Ushiro H."/>
            <person name="Maeda T."/>
            <person name="Yamamoto Y."/>
            <person name="Sagara Y."/>
            <person name="Shizuta Y."/>
        </authorList>
    </citation>
    <scope>NUCLEOTIDE SEQUENCE [MRNA] (ISOFORM 1)</scope>
    <source>
        <tissue>Placenta</tissue>
    </source>
</reference>
<reference key="5">
    <citation type="journal article" date="1989" name="J. Biol. Chem.">
        <title>Structural analysis of the gene encoding human aromatase cytochrome P-450, the enzyme responsible for estrogen biosynthesis.</title>
        <authorList>
            <person name="Means G.D."/>
            <person name="Mahendroo M.S."/>
            <person name="Corbin C.J."/>
            <person name="Mathis J.M."/>
            <person name="Powell F.E."/>
            <person name="Mendelson C.R."/>
            <person name="Simpson E.R."/>
        </authorList>
    </citation>
    <scope>NUCLEOTIDE SEQUENCE [GENOMIC DNA]</scope>
</reference>
<reference key="6">
    <citation type="journal article" date="1989" name="Mol. Endocrinol.">
        <title>Expression of human placental aromatase in Saccharomyces cerevisiae.</title>
        <authorList>
            <person name="Pompon D."/>
            <person name="Liu R.Y."/>
            <person name="Besman M.J."/>
            <person name="Wang P.L."/>
            <person name="Shively J.E."/>
            <person name="Chen S."/>
        </authorList>
    </citation>
    <scope>NUCLEOTIDE SEQUENCE [MRNA] (ISOFORM 1)</scope>
    <source>
        <tissue>Placenta</tissue>
    </source>
</reference>
<reference key="7">
    <citation type="journal article" date="1992" name="J. Biol. Chem.">
        <title>Biochemical and molecular genetic analyses on placental aromatase (P-450AROM) deficiency.</title>
        <authorList>
            <person name="Harada N."/>
            <person name="Ogawa H."/>
            <person name="Shozu M."/>
            <person name="Yamada K."/>
            <person name="Suhara K."/>
            <person name="Nishida E."/>
            <person name="Takagi Y."/>
        </authorList>
    </citation>
    <scope>NUCLEOTIDE SEQUENCE [MRNA] (ISOFORM 1)</scope>
</reference>
<reference key="8">
    <citation type="submission" date="2005-03" db="EMBL/GenBank/DDBJ databases">
        <authorList>
            <consortium name="NIEHS SNPs program"/>
        </authorList>
    </citation>
    <scope>NUCLEOTIDE SEQUENCE [GENOMIC DNA]</scope>
    <scope>VARIANTS ARG-39; MET-201 AND CYS-264</scope>
</reference>
<reference key="9">
    <citation type="journal article" date="2006" name="Nature">
        <title>Analysis of the DNA sequence and duplication history of human chromosome 15.</title>
        <authorList>
            <person name="Zody M.C."/>
            <person name="Garber M."/>
            <person name="Sharpe T."/>
            <person name="Young S.K."/>
            <person name="Rowen L."/>
            <person name="O'Neill K."/>
            <person name="Whittaker C.A."/>
            <person name="Kamal M."/>
            <person name="Chang J.L."/>
            <person name="Cuomo C.A."/>
            <person name="Dewar K."/>
            <person name="FitzGerald M.G."/>
            <person name="Kodira C.D."/>
            <person name="Madan A."/>
            <person name="Qin S."/>
            <person name="Yang X."/>
            <person name="Abbasi N."/>
            <person name="Abouelleil A."/>
            <person name="Arachchi H.M."/>
            <person name="Baradarani L."/>
            <person name="Birditt B."/>
            <person name="Bloom S."/>
            <person name="Bloom T."/>
            <person name="Borowsky M.L."/>
            <person name="Burke J."/>
            <person name="Butler J."/>
            <person name="Cook A."/>
            <person name="DeArellano K."/>
            <person name="DeCaprio D."/>
            <person name="Dorris L. III"/>
            <person name="Dors M."/>
            <person name="Eichler E.E."/>
            <person name="Engels R."/>
            <person name="Fahey J."/>
            <person name="Fleetwood P."/>
            <person name="Friedman C."/>
            <person name="Gearin G."/>
            <person name="Hall J.L."/>
            <person name="Hensley G."/>
            <person name="Johnson E."/>
            <person name="Jones C."/>
            <person name="Kamat A."/>
            <person name="Kaur A."/>
            <person name="Locke D.P."/>
            <person name="Madan A."/>
            <person name="Munson G."/>
            <person name="Jaffe D.B."/>
            <person name="Lui A."/>
            <person name="Macdonald P."/>
            <person name="Mauceli E."/>
            <person name="Naylor J.W."/>
            <person name="Nesbitt R."/>
            <person name="Nicol R."/>
            <person name="O'Leary S.B."/>
            <person name="Ratcliffe A."/>
            <person name="Rounsley S."/>
            <person name="She X."/>
            <person name="Sneddon K.M.B."/>
            <person name="Stewart S."/>
            <person name="Sougnez C."/>
            <person name="Stone S.M."/>
            <person name="Topham K."/>
            <person name="Vincent D."/>
            <person name="Wang S."/>
            <person name="Zimmer A.R."/>
            <person name="Birren B.W."/>
            <person name="Hood L."/>
            <person name="Lander E.S."/>
            <person name="Nusbaum C."/>
        </authorList>
    </citation>
    <scope>NUCLEOTIDE SEQUENCE [LARGE SCALE GENOMIC DNA]</scope>
</reference>
<reference key="10">
    <citation type="journal article" date="2004" name="Genome Res.">
        <title>The status, quality, and expansion of the NIH full-length cDNA project: the Mammalian Gene Collection (MGC).</title>
        <authorList>
            <consortium name="The MGC Project Team"/>
        </authorList>
    </citation>
    <scope>NUCLEOTIDE SEQUENCE [LARGE SCALE MRNA] (ISOFORMS 1 AND 2)</scope>
    <scope>VARIANT MET-201</scope>
    <source>
        <tissue>Ovary</tissue>
        <tissue>Placenta</tissue>
    </source>
</reference>
<reference key="11">
    <citation type="journal article" date="1986" name="Proc. Natl. Acad. Sci. U.S.A.">
        <title>Isolation and characterization of a complementary DNA specific for human aromatase-system cytochrome P-450 mRNA.</title>
        <authorList>
            <person name="Evans C.T."/>
            <person name="Ledesma D.B."/>
            <person name="Schulz T.Z."/>
            <person name="Simpson E.R."/>
            <person name="Mendelson C.R."/>
        </authorList>
    </citation>
    <scope>NUCLEOTIDE SEQUENCE [MRNA] OF 85-503 (ISOFORM 1)</scope>
    <scope>TISSUE SPECIFICITY</scope>
    <source>
        <tissue>Placenta</tissue>
    </source>
</reference>
<reference key="12">
    <citation type="journal article" date="1987" name="Mol. Cell. Endocrinol.">
        <title>Sequencing of cDNA inserts encoding aromatase cytochrome P-450 (P-450AROM).</title>
        <authorList>
            <person name="Simpson E.R."/>
            <person name="Evans C.T."/>
            <person name="Corbin C.J."/>
            <person name="Powell F.E."/>
            <person name="Ledesma D.B."/>
            <person name="Mendelson C.R."/>
        </authorList>
    </citation>
    <scope>NUCLEOTIDE SEQUENCE [MRNA] OF 85-503 (ISOFORM 1)</scope>
    <scope>VARIANT CYS-264</scope>
</reference>
<reference key="13">
    <citation type="journal article" date="1991" name="J. Biol. Chem.">
        <title>Tissue-specific expression of human P-450AROM. The promoter responsible for expression in adipose tissue is different from that utilized in placenta.</title>
        <authorList>
            <person name="Mahendroo M.S."/>
            <person name="Means G.D."/>
            <person name="Mendelson C.R."/>
            <person name="Simpson E.R."/>
        </authorList>
    </citation>
    <scope>NUCLEOTIDE SEQUENCE [GENOMIC DNA] OF 1-49</scope>
    <scope>TISSUE SPECIFICITY</scope>
</reference>
<reference key="14">
    <citation type="journal article" date="1993" name="J. Biol. Chem.">
        <title>Tissue-specific and hormonally controlled alternative promoters regulate aromatase cytochrome P450 gene expression in human adipose tissue.</title>
        <authorList>
            <person name="Mahendroo M.S."/>
            <person name="Mendelson C.R."/>
            <person name="Simpson E.R."/>
        </authorList>
    </citation>
    <scope>NUCLEOTIDE SEQUENCE [GENOMIC DNA] OF 1-49</scope>
    <scope>TISSUE SPECIFICITY</scope>
    <scope>ALTERNATIVE PROMOTER USAGE</scope>
</reference>
<reference key="15">
    <citation type="journal article" date="1986" name="Biochem. Biophys. Res. Commun.">
        <title>Amino terminal sequence analysis of human placenta aromatase.</title>
        <authorList>
            <person name="Chen S."/>
            <person name="Shively J.E."/>
            <person name="Nakajin S."/>
            <person name="Shinoda M."/>
            <person name="Hall P.F."/>
        </authorList>
    </citation>
    <scope>PRELIMINARY PROTEIN SEQUENCE OF N-TERMINUS</scope>
    <source>
        <tissue>Placenta</tissue>
    </source>
</reference>
<reference key="16">
    <citation type="journal article" date="1994" name="Biochem. Biophys. Res. Commun.">
        <title>Novel exon 1 of the aromatase gene specific for aromatase transcripts in human brain.</title>
        <authorList>
            <person name="Honda S."/>
            <person name="Harada N."/>
            <person name="Takagi Y."/>
        </authorList>
    </citation>
    <scope>ALTERNATIVE PROMOTER USAGE</scope>
    <scope>TISSUE SPECIFICITY</scope>
</reference>
<reference key="17">
    <citation type="journal article" date="2010" name="J. Biol. Chem.">
        <title>Kinetic analysis of the three-step steroid aromatase reaction of human cytochrome P450 19A1.</title>
        <authorList>
            <person name="Sohl C.D."/>
            <person name="Guengerich F.P."/>
        </authorList>
    </citation>
    <scope>FUNCTION</scope>
    <scope>CATALYTIC ACTIVITY</scope>
    <scope>BIOPHYSICOCHEMICAL PROPERTIES</scope>
    <scope>PATHWAY</scope>
</reference>
<reference key="18">
    <citation type="journal article" date="2012" name="J. Biol. Chem.">
        <title>Oxidation of dihydrotestosterone by human cytochromes P450 19A1 and 3A4.</title>
        <authorList>
            <person name="Cheng Q."/>
            <person name="Sohl C.D."/>
            <person name="Yoshimoto F.K."/>
            <person name="Guengerich F.P."/>
        </authorList>
    </citation>
    <scope>FUNCTION</scope>
    <scope>CATALYTIC ACTIVITY</scope>
    <scope>BIOPHYSICOCHEMICAL PROPERTIES</scope>
    <scope>PATHWAY</scope>
</reference>
<reference key="19">
    <citation type="journal article" date="2009" name="Nature">
        <title>Structural basis for androgen specificity and oestrogen synthesis in human aromatase.</title>
        <authorList>
            <person name="Ghosh D."/>
            <person name="Griswold J."/>
            <person name="Erman M."/>
            <person name="Pangborn W."/>
        </authorList>
    </citation>
    <scope>X-RAY CRYSTALLOGRAPHY (2.9 ANGSTROMS) IN COMPLEX WITH ANDROSTENEDIONE</scope>
    <scope>HEME</scope>
</reference>
<reference key="20">
    <citation type="journal article" date="1993" name="Proc. Natl. Acad. Sci. U.S.A.">
        <title>Molecular basis of aromatase deficiency in an adult female with sexual infantilism and polycystic ovaries.</title>
        <authorList>
            <person name="Ito Y."/>
            <person name="Fisher C.R."/>
            <person name="Conte F.A."/>
            <person name="Grumbach M.M."/>
            <person name="Simpson E.R."/>
        </authorList>
    </citation>
    <scope>VARIANTS AROD CYS-435 AND TYR-437</scope>
</reference>
<reference key="21">
    <citation type="journal article" date="1995" name="J. Clin. Endocrinol. Metab.">
        <title>Aromatase deficiency in male and female siblings caused by a novel mutation and the physiological role of estrogens.</title>
        <authorList>
            <person name="Morishima A."/>
            <person name="Grumbach M.M."/>
            <person name="Simpson E.R."/>
            <person name="Fisher C."/>
            <person name="Qin K."/>
        </authorList>
    </citation>
    <scope>VARIANT AROD CYS-375</scope>
</reference>
<reference key="22">
    <citation type="journal article" date="1997" name="N. Engl. J. Med.">
        <title>Effect of testosterone and estradiol in a man with aromatase deficiency.</title>
        <authorList>
            <person name="Carani C."/>
            <person name="Qin K."/>
            <person name="Simoni M."/>
            <person name="Faustini-Fustini M."/>
            <person name="Serpente S."/>
            <person name="Boyd J."/>
            <person name="Korach K.S."/>
            <person name="Simpson E.R."/>
        </authorList>
    </citation>
    <scope>VARIANT AROD GLN-365</scope>
</reference>
<reference key="23">
    <citation type="journal article" date="1997" name="Pharmacogenetics">
        <title>Arginine-cysteine polymorphism at codon 264 of the human CYP19 gene does not affect aromatase activity.</title>
        <authorList>
            <person name="Watanabe J."/>
            <person name="Harada N."/>
            <person name="Suemasu K."/>
            <person name="Higashi Y."/>
            <person name="Gotoh O."/>
            <person name="Kawajiri K."/>
        </authorList>
    </citation>
    <scope>VARIANT CYS-264</scope>
</reference>
<reference key="24">
    <citation type="journal article" date="2000" name="Int. J. Cancer">
        <title>Breast cancer risk associated with polymorphism in CYP19 in Japanese women.</title>
        <authorList>
            <person name="Miyoshi Y."/>
            <person name="Iwao K."/>
            <person name="Ikeda N."/>
            <person name="Egawa C."/>
            <person name="Noguchi S."/>
        </authorList>
    </citation>
    <scope>VARIANTS ARG-39 AND CYS-264</scope>
</reference>
<reference key="25">
    <citation type="journal article" date="2008" name="Nature">
        <title>DNA sequencing of a cytogenetically normal acute myeloid leukaemia genome.</title>
        <authorList>
            <person name="Ley T.J."/>
            <person name="Mardis E.R."/>
            <person name="Ding L."/>
            <person name="Fulton B."/>
            <person name="McLellan M.D."/>
            <person name="Chen K."/>
            <person name="Dooling D."/>
            <person name="Dunford-Shore B.H."/>
            <person name="McGrath S."/>
            <person name="Hickenbotham M."/>
            <person name="Cook L."/>
            <person name="Abbott R."/>
            <person name="Larson D.E."/>
            <person name="Koboldt D.C."/>
            <person name="Pohl C."/>
            <person name="Smith S."/>
            <person name="Hawkins A."/>
            <person name="Abbott S."/>
            <person name="Locke D."/>
            <person name="Hillier L.W."/>
            <person name="Miner T."/>
            <person name="Fulton L."/>
            <person name="Magrini V."/>
            <person name="Wylie T."/>
            <person name="Glasscock J."/>
            <person name="Conyers J."/>
            <person name="Sander N."/>
            <person name="Shi X."/>
            <person name="Osborne J.R."/>
            <person name="Minx P."/>
            <person name="Gordon D."/>
            <person name="Chinwalla A."/>
            <person name="Zhao Y."/>
            <person name="Ries R.E."/>
            <person name="Payton J.E."/>
            <person name="Westervelt P."/>
            <person name="Tomasson M.H."/>
            <person name="Watson M."/>
            <person name="Baty J."/>
            <person name="Ivanovich J."/>
            <person name="Heath S."/>
            <person name="Shannon W.D."/>
            <person name="Nagarajan R."/>
            <person name="Walter M.J."/>
            <person name="Link D.C."/>
            <person name="Graubert T.A."/>
            <person name="DiPersio J.F."/>
            <person name="Wilson R.K."/>
        </authorList>
    </citation>
    <scope>VARIANT [LARGE SCALE ANALYSIS] LEU-375</scope>
</reference>
<reference key="26">
    <citation type="journal article" date="2014" name="Mol. Cell. Endocrinol.">
        <title>Characterization of a novel CYP19A1 (aromatase) R192H mutation causing virilization of a 46,XX newborn, undervirilization of the 46,XY brother, but no virilization of the mother during pregnancies.</title>
        <authorList>
            <person name="Bouchoucha N."/>
            <person name="Samara-Boustani D."/>
            <person name="Pandey A.V."/>
            <person name="Bony-Trifunovic H."/>
            <person name="Hofer G."/>
            <person name="Aigrain Y."/>
            <person name="Polak M."/>
            <person name="Fluck C.E."/>
        </authorList>
    </citation>
    <scope>VARIANT AROD HIS-192</scope>
    <scope>CHARACTERIZATION OF VARIANT AROD HIS-192</scope>
</reference>
<reference key="27">
    <citation type="journal article" date="2017" name="Genet. Med.">
        <title>A dominant variant in DMXL2 is linked to nonsyndromic hearing loss.</title>
        <authorList>
            <person name="Chen D.Y."/>
            <person name="Liu X.F."/>
            <person name="Lin X.J."/>
            <person name="Zhang D."/>
            <person name="Chai Y.C."/>
            <person name="Yu D.H."/>
            <person name="Sun C.L."/>
            <person name="Wang X.L."/>
            <person name="Zhu W.D."/>
            <person name="Chen Y."/>
            <person name="Sun L.H."/>
            <person name="Wang X.W."/>
            <person name="Shi F.X."/>
            <person name="Huang Z.W."/>
            <person name="Yang T."/>
            <person name="Wu H."/>
        </authorList>
    </citation>
    <scope>VARIANT PRO-314</scope>
</reference>
<reference key="28">
    <citation type="journal article" date="2017" name="J. Steroid Biochem. Mol. Biol.">
        <title>Impact of R264C and R264H polymorphisms in human aromatase function.</title>
        <authorList>
            <person name="Baravalle R."/>
            <person name="Di Nardo G."/>
            <person name="Bandino A."/>
            <person name="Barone I."/>
            <person name="Catalano S."/>
            <person name="Ando S."/>
            <person name="Gilardi G."/>
        </authorList>
    </citation>
    <scope>CHARACTERIZATION OF VARIANTS CYS-264 AND HIS-264</scope>
    <scope>PHOSPHORYLATION</scope>
    <scope>FUNCTION</scope>
    <scope>CATALYTIC ACTIVITY</scope>
    <scope>BIOPHYSICOCHEMICAL PROPERTIES</scope>
</reference>
<proteinExistence type="evidence at protein level"/>
<accession>P11511</accession>
<accession>Q16731</accession>
<accession>Q3B764</accession>
<accession>Q58FA0</accession>
<accession>Q8IYJ7</accession>
<gene>
    <name evidence="25 31" type="primary">CYP19A1</name>
    <name type="synonym">ARO1</name>
    <name type="synonym">CYAR</name>
    <name type="synonym">CYP19</name>
</gene>